<organism>
    <name type="scientific">Pseudomonas putida (strain ATCC 700007 / DSM 6899 / JCM 31910 / BCRC 17059 / LMG 24140 / F1)</name>
    <dbReference type="NCBI Taxonomy" id="351746"/>
    <lineage>
        <taxon>Bacteria</taxon>
        <taxon>Pseudomonadati</taxon>
        <taxon>Pseudomonadota</taxon>
        <taxon>Gammaproteobacteria</taxon>
        <taxon>Pseudomonadales</taxon>
        <taxon>Pseudomonadaceae</taxon>
        <taxon>Pseudomonas</taxon>
    </lineage>
</organism>
<sequence>MSAQVIAIDAMGGDFGPRSIVQASIACLSATPSLHLTLVGQPSLLEDLISGLPAADRARLQIVAASEVVGMDERPSQALRGKPDSSMRIALELVRDGKAQACVSAGNTGALMALSRFVLKTLPGIDRPAMVAAIPTQTGYCQLLDLGANVDCSAENLYQFAVMGSVAAQALGVHRPRVALLNIGTEDIKGNQQVKLAATLLQSARGLNYVGFVEGDGLYRGEADVVVCDGFVGNILLKSSEGLATMIGARIEKLFKGGAFARVAGAVAMPLLKRLQADLAPARHNGASFLGLQGIVIKSHGSAGVQGFQSAIQRALIEIQENLPQRLHGRLEDLLP</sequence>
<comment type="function">
    <text evidence="1">Catalyzes the reversible formation of acyl-phosphate (acyl-PO(4)) from acyl-[acyl-carrier-protein] (acyl-ACP). This enzyme utilizes acyl-ACP as fatty acyl donor, but not acyl-CoA.</text>
</comment>
<comment type="catalytic activity">
    <reaction evidence="1">
        <text>a fatty acyl-[ACP] + phosphate = an acyl phosphate + holo-[ACP]</text>
        <dbReference type="Rhea" id="RHEA:42292"/>
        <dbReference type="Rhea" id="RHEA-COMP:9685"/>
        <dbReference type="Rhea" id="RHEA-COMP:14125"/>
        <dbReference type="ChEBI" id="CHEBI:43474"/>
        <dbReference type="ChEBI" id="CHEBI:59918"/>
        <dbReference type="ChEBI" id="CHEBI:64479"/>
        <dbReference type="ChEBI" id="CHEBI:138651"/>
        <dbReference type="EC" id="2.3.1.274"/>
    </reaction>
</comment>
<comment type="pathway">
    <text evidence="1">Lipid metabolism; phospholipid metabolism.</text>
</comment>
<comment type="subunit">
    <text evidence="1">Homodimer. Probably interacts with PlsY.</text>
</comment>
<comment type="subcellular location">
    <subcellularLocation>
        <location evidence="1">Cytoplasm</location>
    </subcellularLocation>
    <text evidence="1">Associated with the membrane possibly through PlsY.</text>
</comment>
<comment type="similarity">
    <text evidence="1">Belongs to the PlsX family.</text>
</comment>
<comment type="sequence caution" evidence="2">
    <conflict type="erroneous initiation">
        <sequence resource="EMBL-CDS" id="ABQ79926"/>
    </conflict>
</comment>
<dbReference type="EC" id="2.3.1.274" evidence="1"/>
<dbReference type="EMBL" id="CP000712">
    <property type="protein sequence ID" value="ABQ79926.1"/>
    <property type="status" value="ALT_INIT"/>
    <property type="molecule type" value="Genomic_DNA"/>
</dbReference>
<dbReference type="SMR" id="A5W716"/>
<dbReference type="KEGG" id="ppf:Pput_3802"/>
<dbReference type="eggNOG" id="COG0416">
    <property type="taxonomic scope" value="Bacteria"/>
</dbReference>
<dbReference type="HOGENOM" id="CLU_039379_1_0_6"/>
<dbReference type="UniPathway" id="UPA00085"/>
<dbReference type="GO" id="GO:0005737">
    <property type="term" value="C:cytoplasm"/>
    <property type="evidence" value="ECO:0007669"/>
    <property type="project" value="UniProtKB-SubCell"/>
</dbReference>
<dbReference type="GO" id="GO:0043811">
    <property type="term" value="F:phosphate:acyl-[acyl carrier protein] acyltransferase activity"/>
    <property type="evidence" value="ECO:0007669"/>
    <property type="project" value="UniProtKB-UniRule"/>
</dbReference>
<dbReference type="GO" id="GO:0006633">
    <property type="term" value="P:fatty acid biosynthetic process"/>
    <property type="evidence" value="ECO:0007669"/>
    <property type="project" value="UniProtKB-UniRule"/>
</dbReference>
<dbReference type="GO" id="GO:0008654">
    <property type="term" value="P:phospholipid biosynthetic process"/>
    <property type="evidence" value="ECO:0007669"/>
    <property type="project" value="UniProtKB-KW"/>
</dbReference>
<dbReference type="Gene3D" id="3.40.718.10">
    <property type="entry name" value="Isopropylmalate Dehydrogenase"/>
    <property type="match status" value="1"/>
</dbReference>
<dbReference type="HAMAP" id="MF_00019">
    <property type="entry name" value="PlsX"/>
    <property type="match status" value="1"/>
</dbReference>
<dbReference type="InterPro" id="IPR003664">
    <property type="entry name" value="FA_synthesis"/>
</dbReference>
<dbReference type="InterPro" id="IPR012281">
    <property type="entry name" value="Phospholipid_synth_PlsX-like"/>
</dbReference>
<dbReference type="NCBIfam" id="TIGR00182">
    <property type="entry name" value="plsX"/>
    <property type="match status" value="1"/>
</dbReference>
<dbReference type="PANTHER" id="PTHR30100">
    <property type="entry name" value="FATTY ACID/PHOSPHOLIPID SYNTHESIS PROTEIN PLSX"/>
    <property type="match status" value="1"/>
</dbReference>
<dbReference type="PANTHER" id="PTHR30100:SF1">
    <property type="entry name" value="PHOSPHATE ACYLTRANSFERASE"/>
    <property type="match status" value="1"/>
</dbReference>
<dbReference type="Pfam" id="PF02504">
    <property type="entry name" value="FA_synthesis"/>
    <property type="match status" value="1"/>
</dbReference>
<dbReference type="PIRSF" id="PIRSF002465">
    <property type="entry name" value="Phsphlp_syn_PlsX"/>
    <property type="match status" value="1"/>
</dbReference>
<dbReference type="SUPFAM" id="SSF53659">
    <property type="entry name" value="Isocitrate/Isopropylmalate dehydrogenase-like"/>
    <property type="match status" value="1"/>
</dbReference>
<evidence type="ECO:0000255" key="1">
    <source>
        <dbReference type="HAMAP-Rule" id="MF_00019"/>
    </source>
</evidence>
<evidence type="ECO:0000305" key="2"/>
<reference key="1">
    <citation type="submission" date="2007-05" db="EMBL/GenBank/DDBJ databases">
        <title>Complete sequence of Pseudomonas putida F1.</title>
        <authorList>
            <consortium name="US DOE Joint Genome Institute"/>
            <person name="Copeland A."/>
            <person name="Lucas S."/>
            <person name="Lapidus A."/>
            <person name="Barry K."/>
            <person name="Detter J.C."/>
            <person name="Glavina del Rio T."/>
            <person name="Hammon N."/>
            <person name="Israni S."/>
            <person name="Dalin E."/>
            <person name="Tice H."/>
            <person name="Pitluck S."/>
            <person name="Chain P."/>
            <person name="Malfatti S."/>
            <person name="Shin M."/>
            <person name="Vergez L."/>
            <person name="Schmutz J."/>
            <person name="Larimer F."/>
            <person name="Land M."/>
            <person name="Hauser L."/>
            <person name="Kyrpides N."/>
            <person name="Lykidis A."/>
            <person name="Parales R."/>
            <person name="Richardson P."/>
        </authorList>
    </citation>
    <scope>NUCLEOTIDE SEQUENCE [LARGE SCALE GENOMIC DNA]</scope>
    <source>
        <strain>ATCC 700007 / DSM 6899 / JCM 31910 / BCRC 17059 / LMG 24140 / F1</strain>
    </source>
</reference>
<keyword id="KW-0963">Cytoplasm</keyword>
<keyword id="KW-0444">Lipid biosynthesis</keyword>
<keyword id="KW-0443">Lipid metabolism</keyword>
<keyword id="KW-0594">Phospholipid biosynthesis</keyword>
<keyword id="KW-1208">Phospholipid metabolism</keyword>
<keyword id="KW-0808">Transferase</keyword>
<name>PLSX_PSEP1</name>
<accession>A5W716</accession>
<feature type="chain" id="PRO_0000329255" description="Phosphate acyltransferase">
    <location>
        <begin position="1"/>
        <end position="336"/>
    </location>
</feature>
<gene>
    <name evidence="1" type="primary">plsX</name>
    <name type="ordered locus">Pput_3802</name>
</gene>
<protein>
    <recommendedName>
        <fullName evidence="1">Phosphate acyltransferase</fullName>
        <ecNumber evidence="1">2.3.1.274</ecNumber>
    </recommendedName>
    <alternativeName>
        <fullName evidence="1">Acyl-ACP phosphotransacylase</fullName>
    </alternativeName>
    <alternativeName>
        <fullName evidence="1">Acyl-[acyl-carrier-protein]--phosphate acyltransferase</fullName>
    </alternativeName>
    <alternativeName>
        <fullName evidence="1">Phosphate-acyl-ACP acyltransferase</fullName>
    </alternativeName>
</protein>
<proteinExistence type="inferred from homology"/>